<organism>
    <name type="scientific">Caulobacter vibrioides (strain ATCC 19089 / CIP 103742 / CB 15)</name>
    <name type="common">Caulobacter crescentus</name>
    <dbReference type="NCBI Taxonomy" id="190650"/>
    <lineage>
        <taxon>Bacteria</taxon>
        <taxon>Pseudomonadati</taxon>
        <taxon>Pseudomonadota</taxon>
        <taxon>Alphaproteobacteria</taxon>
        <taxon>Caulobacterales</taxon>
        <taxon>Caulobacteraceae</taxon>
        <taxon>Caulobacter</taxon>
    </lineage>
</organism>
<proteinExistence type="inferred from homology"/>
<dbReference type="EC" id="2.7.7.59" evidence="1"/>
<dbReference type="EC" id="3.1.4.-" evidence="1"/>
<dbReference type="EMBL" id="AE005673">
    <property type="protein sequence ID" value="AAK22001.1"/>
    <property type="molecule type" value="Genomic_DNA"/>
</dbReference>
<dbReference type="PIR" id="E87250">
    <property type="entry name" value="E87250"/>
</dbReference>
<dbReference type="RefSeq" id="NP_418833.1">
    <property type="nucleotide sequence ID" value="NC_002696.2"/>
</dbReference>
<dbReference type="RefSeq" id="WP_010917903.1">
    <property type="nucleotide sequence ID" value="NC_002696.2"/>
</dbReference>
<dbReference type="SMR" id="Q9AC53"/>
<dbReference type="STRING" id="190650.CC_0013"/>
<dbReference type="EnsemblBacteria" id="AAK22001">
    <property type="protein sequence ID" value="AAK22001"/>
    <property type="gene ID" value="CC_0013"/>
</dbReference>
<dbReference type="KEGG" id="ccr:CC_0013"/>
<dbReference type="PATRIC" id="fig|190650.5.peg.14"/>
<dbReference type="eggNOG" id="COG2844">
    <property type="taxonomic scope" value="Bacteria"/>
</dbReference>
<dbReference type="HOGENOM" id="CLU_012833_1_0_5"/>
<dbReference type="Proteomes" id="UP000001816">
    <property type="component" value="Chromosome"/>
</dbReference>
<dbReference type="GO" id="GO:0008773">
    <property type="term" value="F:[protein-PII] uridylyltransferase activity"/>
    <property type="evidence" value="ECO:0007669"/>
    <property type="project" value="UniProtKB-UniRule"/>
</dbReference>
<dbReference type="GO" id="GO:0008081">
    <property type="term" value="F:phosphoric diester hydrolase activity"/>
    <property type="evidence" value="ECO:0007669"/>
    <property type="project" value="UniProtKB-UniRule"/>
</dbReference>
<dbReference type="GO" id="GO:0006808">
    <property type="term" value="P:regulation of nitrogen utilization"/>
    <property type="evidence" value="ECO:0007669"/>
    <property type="project" value="UniProtKB-UniRule"/>
</dbReference>
<dbReference type="CDD" id="cd04899">
    <property type="entry name" value="ACT_ACR-UUR-like_2"/>
    <property type="match status" value="1"/>
</dbReference>
<dbReference type="CDD" id="cd04900">
    <property type="entry name" value="ACT_UUR-like_1"/>
    <property type="match status" value="1"/>
</dbReference>
<dbReference type="CDD" id="cd00077">
    <property type="entry name" value="HDc"/>
    <property type="match status" value="1"/>
</dbReference>
<dbReference type="CDD" id="cd05401">
    <property type="entry name" value="NT_GlnE_GlnD_like"/>
    <property type="match status" value="1"/>
</dbReference>
<dbReference type="Gene3D" id="3.30.70.260">
    <property type="match status" value="1"/>
</dbReference>
<dbReference type="Gene3D" id="3.30.460.10">
    <property type="entry name" value="Beta Polymerase, domain 2"/>
    <property type="match status" value="1"/>
</dbReference>
<dbReference type="Gene3D" id="1.10.3090.10">
    <property type="entry name" value="cca-adding enzyme, domain 2"/>
    <property type="match status" value="1"/>
</dbReference>
<dbReference type="HAMAP" id="MF_00277">
    <property type="entry name" value="PII_uridylyl_transf"/>
    <property type="match status" value="1"/>
</dbReference>
<dbReference type="InterPro" id="IPR045865">
    <property type="entry name" value="ACT-like_dom_sf"/>
</dbReference>
<dbReference type="InterPro" id="IPR002912">
    <property type="entry name" value="ACT_dom"/>
</dbReference>
<dbReference type="InterPro" id="IPR003607">
    <property type="entry name" value="HD/PDEase_dom"/>
</dbReference>
<dbReference type="InterPro" id="IPR006674">
    <property type="entry name" value="HD_domain"/>
</dbReference>
<dbReference type="InterPro" id="IPR043519">
    <property type="entry name" value="NT_sf"/>
</dbReference>
<dbReference type="InterPro" id="IPR013546">
    <property type="entry name" value="PII_UdlTrfase/GS_AdlTrfase"/>
</dbReference>
<dbReference type="InterPro" id="IPR010043">
    <property type="entry name" value="UTase/UR"/>
</dbReference>
<dbReference type="NCBIfam" id="NF003467">
    <property type="entry name" value="PRK05092.1"/>
    <property type="match status" value="1"/>
</dbReference>
<dbReference type="NCBIfam" id="TIGR01693">
    <property type="entry name" value="UTase_glnD"/>
    <property type="match status" value="1"/>
</dbReference>
<dbReference type="PANTHER" id="PTHR47320">
    <property type="entry name" value="BIFUNCTIONAL URIDYLYLTRANSFERASE/URIDYLYL-REMOVING ENZYME"/>
    <property type="match status" value="1"/>
</dbReference>
<dbReference type="PANTHER" id="PTHR47320:SF1">
    <property type="entry name" value="BIFUNCTIONAL URIDYLYLTRANSFERASE_URIDYLYL-REMOVING ENZYME"/>
    <property type="match status" value="1"/>
</dbReference>
<dbReference type="Pfam" id="PF08335">
    <property type="entry name" value="GlnD_UR_UTase"/>
    <property type="match status" value="1"/>
</dbReference>
<dbReference type="Pfam" id="PF01966">
    <property type="entry name" value="HD"/>
    <property type="match status" value="1"/>
</dbReference>
<dbReference type="PIRSF" id="PIRSF006288">
    <property type="entry name" value="PII_uridyltransf"/>
    <property type="match status" value="1"/>
</dbReference>
<dbReference type="SMART" id="SM00471">
    <property type="entry name" value="HDc"/>
    <property type="match status" value="1"/>
</dbReference>
<dbReference type="SUPFAM" id="SSF55021">
    <property type="entry name" value="ACT-like"/>
    <property type="match status" value="2"/>
</dbReference>
<dbReference type="SUPFAM" id="SSF81301">
    <property type="entry name" value="Nucleotidyltransferase"/>
    <property type="match status" value="1"/>
</dbReference>
<dbReference type="SUPFAM" id="SSF81593">
    <property type="entry name" value="Nucleotidyltransferase substrate binding subunit/domain"/>
    <property type="match status" value="1"/>
</dbReference>
<dbReference type="SUPFAM" id="SSF81891">
    <property type="entry name" value="Poly A polymerase C-terminal region-like"/>
    <property type="match status" value="1"/>
</dbReference>
<dbReference type="PROSITE" id="PS51671">
    <property type="entry name" value="ACT"/>
    <property type="match status" value="2"/>
</dbReference>
<dbReference type="PROSITE" id="PS51831">
    <property type="entry name" value="HD"/>
    <property type="match status" value="1"/>
</dbReference>
<protein>
    <recommendedName>
        <fullName evidence="1">Bifunctional uridylyltransferase/uridylyl-removing enzyme</fullName>
        <shortName evidence="1">UTase/UR</shortName>
    </recommendedName>
    <alternativeName>
        <fullName evidence="1">Bifunctional [protein-PII] modification enzyme</fullName>
    </alternativeName>
    <alternativeName>
        <fullName evidence="1">Bifunctional nitrogen sensor protein</fullName>
    </alternativeName>
    <domain>
        <recommendedName>
            <fullName evidence="1">[Protein-PII] uridylyltransferase</fullName>
            <shortName evidence="1">PII uridylyltransferase</shortName>
            <shortName evidence="1">UTase</shortName>
            <ecNumber evidence="1">2.7.7.59</ecNumber>
        </recommendedName>
    </domain>
    <domain>
        <recommendedName>
            <fullName evidence="1">[Protein-PII]-UMP uridylyl-removing enzyme</fullName>
            <shortName evidence="1">UR</shortName>
            <ecNumber evidence="1">3.1.4.-</ecNumber>
        </recommendedName>
    </domain>
</protein>
<accession>Q9AC53</accession>
<name>GLND_CAUVC</name>
<feature type="chain" id="PRO_0000192727" description="Bifunctional uridylyltransferase/uridylyl-removing enzyme">
    <location>
        <begin position="1"/>
        <end position="940"/>
    </location>
</feature>
<feature type="domain" description="HD" evidence="2">
    <location>
        <begin position="496"/>
        <end position="618"/>
    </location>
</feature>
<feature type="domain" description="ACT 1" evidence="1">
    <location>
        <begin position="737"/>
        <end position="821"/>
    </location>
</feature>
<feature type="domain" description="ACT 2" evidence="1">
    <location>
        <begin position="848"/>
        <end position="929"/>
    </location>
</feature>
<feature type="region of interest" description="Uridylyltransferase">
    <location>
        <begin position="1"/>
        <end position="379"/>
    </location>
</feature>
<feature type="region of interest" description="Uridylyl-removing">
    <location>
        <begin position="380"/>
        <end position="736"/>
    </location>
</feature>
<reference key="1">
    <citation type="journal article" date="2001" name="Proc. Natl. Acad. Sci. U.S.A.">
        <title>Complete genome sequence of Caulobacter crescentus.</title>
        <authorList>
            <person name="Nierman W.C."/>
            <person name="Feldblyum T.V."/>
            <person name="Laub M.T."/>
            <person name="Paulsen I.T."/>
            <person name="Nelson K.E."/>
            <person name="Eisen J.A."/>
            <person name="Heidelberg J.F."/>
            <person name="Alley M.R.K."/>
            <person name="Ohta N."/>
            <person name="Maddock J.R."/>
            <person name="Potocka I."/>
            <person name="Nelson W.C."/>
            <person name="Newton A."/>
            <person name="Stephens C."/>
            <person name="Phadke N.D."/>
            <person name="Ely B."/>
            <person name="DeBoy R.T."/>
            <person name="Dodson R.J."/>
            <person name="Durkin A.S."/>
            <person name="Gwinn M.L."/>
            <person name="Haft D.H."/>
            <person name="Kolonay J.F."/>
            <person name="Smit J."/>
            <person name="Craven M.B."/>
            <person name="Khouri H.M."/>
            <person name="Shetty J."/>
            <person name="Berry K.J."/>
            <person name="Utterback T.R."/>
            <person name="Tran K."/>
            <person name="Wolf A.M."/>
            <person name="Vamathevan J.J."/>
            <person name="Ermolaeva M.D."/>
            <person name="White O."/>
            <person name="Salzberg S.L."/>
            <person name="Venter J.C."/>
            <person name="Shapiro L."/>
            <person name="Fraser C.M."/>
        </authorList>
    </citation>
    <scope>NUCLEOTIDE SEQUENCE [LARGE SCALE GENOMIC DNA]</scope>
    <source>
        <strain>ATCC 19089 / CIP 103742 / CB 15</strain>
    </source>
</reference>
<evidence type="ECO:0000255" key="1">
    <source>
        <dbReference type="HAMAP-Rule" id="MF_00277"/>
    </source>
</evidence>
<evidence type="ECO:0000255" key="2">
    <source>
        <dbReference type="PROSITE-ProRule" id="PRU01175"/>
    </source>
</evidence>
<gene>
    <name evidence="1" type="primary">glnD</name>
    <name type="ordered locus">CC_0013</name>
</gene>
<sequence length="940" mass="103396">MPRRLRPTRLEHVVDGHALRARLSAAALDSIGNEAEQRARAIDILKQALFRGRMIAKERLENGASGVETSRLLSGVTDEVITALYDFTTVHVFRARNPTEGERLCLLAVGGYGRGTLAPFSDIDLLFLRPYKQTPHAESVIEYMLYALWDLGFKVGHASRTIEECVRLSKEDFTIRTSILEARRLTGDERLAEDLKKRFRDEVMKATGAQFVAAKLKERDDRQARAGASRYMVEPNVKEGKGGLRDLHTLMWIAEYLHPVDRPEDVFKMEVFSIRETKAFIRAFDFLHAVRAHLHFTTGRPEERLTFDLQPEIARRMGYGDRGDAPAVERFMRRYFLIAKEVGTLTRAFSAKLEAEHFKNEPKGISRFLPGARPKRKALDVEGFYEDGGRLNIEGQEIFEADPVNLIRLFKIADERDLDLHPDAFTAVTRALPLITSRVRRDPDACRAFLDLLARGKRSYRTLTLMNDAGVLGRFIPEFGRVVAQMQFNMYHSYTVDEHTLRAVGVIGDIAAGRLVDDHPLAVSIMPLIEDREALFLAMLLHDTGKGGVGGQEKAGARSARSACERLGVERSKVELVAWLVENHLVMSDFAQKRDVSDPGTVAAFARIVENPERLRLLLVITVADIRAVGPGVWNGWKGQLLRELYNATEAVFRGGRGSDAAANVQRHQESTAEAARAALLETDPAAKGWVAAMENAYFSAFSQDDLFHHAELARRAAIQGGAAAEGQVRPGSNAAEVVIAAKDRRGLFADLALAISSLGGNVVGARVFTSRQGQALDVFYVQDVTGAPFGCENPRALRRLADALEAAGKGDALAVEPRRGSEQTRAAAFAIAPSVTIDNDASNDATVVEASGRDRPGLLHALAKTLADSALSIQSAHIDGYGERAVDAFYVQTTEGGKVTDTRKLNALKADLLAALEQNEASAPAARPGLRRARASVAR</sequence>
<keyword id="KW-0378">Hydrolase</keyword>
<keyword id="KW-0460">Magnesium</keyword>
<keyword id="KW-0511">Multifunctional enzyme</keyword>
<keyword id="KW-0548">Nucleotidyltransferase</keyword>
<keyword id="KW-1185">Reference proteome</keyword>
<keyword id="KW-0677">Repeat</keyword>
<keyword id="KW-0808">Transferase</keyword>
<comment type="function">
    <text evidence="1">Modifies, by uridylylation and deuridylylation, the PII regulatory proteins (GlnB and homologs), in response to the nitrogen status of the cell that GlnD senses through the glutamine level. Under low glutamine levels, catalyzes the conversion of the PII proteins and UTP to PII-UMP and PPi, while under higher glutamine levels, GlnD hydrolyzes PII-UMP to PII and UMP (deuridylylation). Thus, controls uridylylation state and activity of the PII proteins, and plays an important role in the regulation of nitrogen assimilation and metabolism.</text>
</comment>
<comment type="catalytic activity">
    <reaction evidence="1">
        <text>[protein-PII]-L-tyrosine + UTP = [protein-PII]-uridylyl-L-tyrosine + diphosphate</text>
        <dbReference type="Rhea" id="RHEA:13673"/>
        <dbReference type="Rhea" id="RHEA-COMP:12147"/>
        <dbReference type="Rhea" id="RHEA-COMP:12148"/>
        <dbReference type="ChEBI" id="CHEBI:33019"/>
        <dbReference type="ChEBI" id="CHEBI:46398"/>
        <dbReference type="ChEBI" id="CHEBI:46858"/>
        <dbReference type="ChEBI" id="CHEBI:90602"/>
        <dbReference type="EC" id="2.7.7.59"/>
    </reaction>
</comment>
<comment type="catalytic activity">
    <reaction evidence="1">
        <text>[protein-PII]-uridylyl-L-tyrosine + H2O = [protein-PII]-L-tyrosine + UMP + H(+)</text>
        <dbReference type="Rhea" id="RHEA:48600"/>
        <dbReference type="Rhea" id="RHEA-COMP:12147"/>
        <dbReference type="Rhea" id="RHEA-COMP:12148"/>
        <dbReference type="ChEBI" id="CHEBI:15377"/>
        <dbReference type="ChEBI" id="CHEBI:15378"/>
        <dbReference type="ChEBI" id="CHEBI:46858"/>
        <dbReference type="ChEBI" id="CHEBI:57865"/>
        <dbReference type="ChEBI" id="CHEBI:90602"/>
    </reaction>
</comment>
<comment type="cofactor">
    <cofactor evidence="1">
        <name>Mg(2+)</name>
        <dbReference type="ChEBI" id="CHEBI:18420"/>
    </cofactor>
</comment>
<comment type="activity regulation">
    <text evidence="1">Uridylyltransferase (UTase) activity is inhibited by glutamine, while glutamine activates uridylyl-removing (UR) activity.</text>
</comment>
<comment type="domain">
    <text evidence="1">Has four distinct domains: an N-terminal nucleotidyltransferase (NT) domain responsible for UTase activity, a central HD domain that encodes UR activity, and two C-terminal ACT domains that seem to have a role in glutamine sensing.</text>
</comment>
<comment type="similarity">
    <text evidence="1">Belongs to the GlnD family.</text>
</comment>